<evidence type="ECO:0000250" key="1"/>
<evidence type="ECO:0000305" key="2"/>
<reference key="1">
    <citation type="journal article" date="2005" name="DNA Res.">
        <title>Complete nucleotide sequence of the chloroplast genome from the Tasmanian blue gum, Eucalyptus globulus (Myrtaceae).</title>
        <authorList>
            <person name="Steane D.A."/>
        </authorList>
    </citation>
    <scope>NUCLEOTIDE SEQUENCE [LARGE SCALE GENOMIC DNA]</scope>
</reference>
<gene>
    <name type="primary">rpl23-A</name>
</gene>
<gene>
    <name type="primary">rpl23-B</name>
</gene>
<sequence>MDGIKYAVFTDKSIRLLGKNQYTFNVESGSTRTEIKHWVELFFGVKVKAMNSHRLPGKGRRMGPILGHTMHYRRMIITLQPGYSIPPLRKKRT</sequence>
<name>RK23_EUCGG</name>
<feature type="chain" id="PRO_0000272898" description="Large ribosomal subunit protein uL23cz/uL23cy">
    <location>
        <begin position="1"/>
        <end position="93"/>
    </location>
</feature>
<comment type="function">
    <text evidence="1">Binds to 23S rRNA.</text>
</comment>
<comment type="subunit">
    <text evidence="1">Part of the 50S ribosomal subunit.</text>
</comment>
<comment type="subcellular location">
    <subcellularLocation>
        <location>Plastid</location>
        <location>Chloroplast</location>
    </subcellularLocation>
</comment>
<comment type="similarity">
    <text evidence="2">Belongs to the universal ribosomal protein uL23 family.</text>
</comment>
<keyword id="KW-0150">Chloroplast</keyword>
<keyword id="KW-0934">Plastid</keyword>
<keyword id="KW-0687">Ribonucleoprotein</keyword>
<keyword id="KW-0689">Ribosomal protein</keyword>
<keyword id="KW-0694">RNA-binding</keyword>
<keyword id="KW-0699">rRNA-binding</keyword>
<geneLocation type="chloroplast"/>
<organism>
    <name type="scientific">Eucalyptus globulus subsp. globulus</name>
    <name type="common">Tasmanian blue gum</name>
    <dbReference type="NCBI Taxonomy" id="71271"/>
    <lineage>
        <taxon>Eukaryota</taxon>
        <taxon>Viridiplantae</taxon>
        <taxon>Streptophyta</taxon>
        <taxon>Embryophyta</taxon>
        <taxon>Tracheophyta</taxon>
        <taxon>Spermatophyta</taxon>
        <taxon>Magnoliopsida</taxon>
        <taxon>eudicotyledons</taxon>
        <taxon>Gunneridae</taxon>
        <taxon>Pentapetalae</taxon>
        <taxon>rosids</taxon>
        <taxon>malvids</taxon>
        <taxon>Myrtales</taxon>
        <taxon>Myrtaceae</taxon>
        <taxon>Myrtoideae</taxon>
        <taxon>Eucalypteae</taxon>
        <taxon>Eucalyptus</taxon>
    </lineage>
</organism>
<proteinExistence type="inferred from homology"/>
<accession>Q49KT5</accession>
<dbReference type="EMBL" id="AY780259">
    <property type="protein sequence ID" value="AAX21069.1"/>
    <property type="molecule type" value="Genomic_DNA"/>
</dbReference>
<dbReference type="EMBL" id="AY780259">
    <property type="protein sequence ID" value="AAX21092.1"/>
    <property type="molecule type" value="Genomic_DNA"/>
</dbReference>
<dbReference type="SMR" id="Q49KT5"/>
<dbReference type="GO" id="GO:0009507">
    <property type="term" value="C:chloroplast"/>
    <property type="evidence" value="ECO:0007669"/>
    <property type="project" value="UniProtKB-SubCell"/>
</dbReference>
<dbReference type="GO" id="GO:1990904">
    <property type="term" value="C:ribonucleoprotein complex"/>
    <property type="evidence" value="ECO:0007669"/>
    <property type="project" value="UniProtKB-KW"/>
</dbReference>
<dbReference type="GO" id="GO:0005840">
    <property type="term" value="C:ribosome"/>
    <property type="evidence" value="ECO:0007669"/>
    <property type="project" value="UniProtKB-KW"/>
</dbReference>
<dbReference type="GO" id="GO:0003729">
    <property type="term" value="F:mRNA binding"/>
    <property type="evidence" value="ECO:0007669"/>
    <property type="project" value="UniProtKB-ARBA"/>
</dbReference>
<dbReference type="GO" id="GO:0019843">
    <property type="term" value="F:rRNA binding"/>
    <property type="evidence" value="ECO:0007669"/>
    <property type="project" value="UniProtKB-UniRule"/>
</dbReference>
<dbReference type="GO" id="GO:0003735">
    <property type="term" value="F:structural constituent of ribosome"/>
    <property type="evidence" value="ECO:0007669"/>
    <property type="project" value="InterPro"/>
</dbReference>
<dbReference type="GO" id="GO:0006412">
    <property type="term" value="P:translation"/>
    <property type="evidence" value="ECO:0007669"/>
    <property type="project" value="UniProtKB-UniRule"/>
</dbReference>
<dbReference type="FunFam" id="3.30.70.330:FF:000002">
    <property type="entry name" value="50S ribosomal protein L23, chloroplastic"/>
    <property type="match status" value="1"/>
</dbReference>
<dbReference type="Gene3D" id="3.30.70.330">
    <property type="match status" value="1"/>
</dbReference>
<dbReference type="HAMAP" id="MF_01369_B">
    <property type="entry name" value="Ribosomal_uL23_B"/>
    <property type="match status" value="1"/>
</dbReference>
<dbReference type="InterPro" id="IPR012677">
    <property type="entry name" value="Nucleotide-bd_a/b_plait_sf"/>
</dbReference>
<dbReference type="InterPro" id="IPR013025">
    <property type="entry name" value="Ribosomal_uL23-like"/>
</dbReference>
<dbReference type="InterPro" id="IPR012678">
    <property type="entry name" value="Ribosomal_uL23/eL15/eS24_sf"/>
</dbReference>
<dbReference type="InterPro" id="IPR001014">
    <property type="entry name" value="Ribosomal_uL23_CS"/>
</dbReference>
<dbReference type="PANTHER" id="PTHR11620">
    <property type="entry name" value="60S RIBOSOMAL PROTEIN L23A"/>
    <property type="match status" value="1"/>
</dbReference>
<dbReference type="Pfam" id="PF00276">
    <property type="entry name" value="Ribosomal_L23"/>
    <property type="match status" value="1"/>
</dbReference>
<dbReference type="SUPFAM" id="SSF54189">
    <property type="entry name" value="Ribosomal proteins S24e, L23 and L15e"/>
    <property type="match status" value="1"/>
</dbReference>
<dbReference type="PROSITE" id="PS00050">
    <property type="entry name" value="RIBOSOMAL_L23"/>
    <property type="match status" value="1"/>
</dbReference>
<protein>
    <recommendedName>
        <fullName evidence="2">Large ribosomal subunit protein uL23cz/uL23cy</fullName>
    </recommendedName>
    <alternativeName>
        <fullName>50S ribosomal protein L23, chloroplastic</fullName>
    </alternativeName>
</protein>